<comment type="function">
    <text evidence="1">Catalyzes a salvage reaction resulting in the formation of AMP, that is energically less costly than de novo synthesis.</text>
</comment>
<comment type="catalytic activity">
    <reaction evidence="1">
        <text>AMP + diphosphate = 5-phospho-alpha-D-ribose 1-diphosphate + adenine</text>
        <dbReference type="Rhea" id="RHEA:16609"/>
        <dbReference type="ChEBI" id="CHEBI:16708"/>
        <dbReference type="ChEBI" id="CHEBI:33019"/>
        <dbReference type="ChEBI" id="CHEBI:58017"/>
        <dbReference type="ChEBI" id="CHEBI:456215"/>
        <dbReference type="EC" id="2.4.2.7"/>
    </reaction>
</comment>
<comment type="pathway">
    <text evidence="1">Purine metabolism; AMP biosynthesis via salvage pathway; AMP from adenine: step 1/1.</text>
</comment>
<comment type="subunit">
    <text evidence="1">Homodimer.</text>
</comment>
<comment type="subcellular location">
    <subcellularLocation>
        <location evidence="1">Cytoplasm</location>
    </subcellularLocation>
</comment>
<comment type="similarity">
    <text evidence="1">Belongs to the purine/pyrimidine phosphoribosyltransferase family.</text>
</comment>
<comment type="sequence caution" evidence="2">
    <conflict type="erroneous initiation">
        <sequence resource="EMBL-CDS" id="ABI99924"/>
    </conflict>
</comment>
<dbReference type="EC" id="2.4.2.7" evidence="1"/>
<dbReference type="EMBL" id="CP000468">
    <property type="protein sequence ID" value="ABI99924.1"/>
    <property type="status" value="ALT_INIT"/>
    <property type="molecule type" value="Genomic_DNA"/>
</dbReference>
<dbReference type="RefSeq" id="WP_000127356.1">
    <property type="nucleotide sequence ID" value="NZ_CADILS010000009.1"/>
</dbReference>
<dbReference type="SMR" id="A1A8D5"/>
<dbReference type="GeneID" id="93776981"/>
<dbReference type="KEGG" id="ecv:APECO1_1546"/>
<dbReference type="HOGENOM" id="CLU_063339_3_0_6"/>
<dbReference type="UniPathway" id="UPA00588">
    <property type="reaction ID" value="UER00646"/>
</dbReference>
<dbReference type="Proteomes" id="UP000008216">
    <property type="component" value="Chromosome"/>
</dbReference>
<dbReference type="GO" id="GO:0005737">
    <property type="term" value="C:cytoplasm"/>
    <property type="evidence" value="ECO:0007669"/>
    <property type="project" value="UniProtKB-SubCell"/>
</dbReference>
<dbReference type="GO" id="GO:0002055">
    <property type="term" value="F:adenine binding"/>
    <property type="evidence" value="ECO:0007669"/>
    <property type="project" value="TreeGrafter"/>
</dbReference>
<dbReference type="GO" id="GO:0003999">
    <property type="term" value="F:adenine phosphoribosyltransferase activity"/>
    <property type="evidence" value="ECO:0007669"/>
    <property type="project" value="UniProtKB-UniRule"/>
</dbReference>
<dbReference type="GO" id="GO:0016208">
    <property type="term" value="F:AMP binding"/>
    <property type="evidence" value="ECO:0007669"/>
    <property type="project" value="TreeGrafter"/>
</dbReference>
<dbReference type="GO" id="GO:0006168">
    <property type="term" value="P:adenine salvage"/>
    <property type="evidence" value="ECO:0007669"/>
    <property type="project" value="InterPro"/>
</dbReference>
<dbReference type="GO" id="GO:0044209">
    <property type="term" value="P:AMP salvage"/>
    <property type="evidence" value="ECO:0007669"/>
    <property type="project" value="UniProtKB-UniRule"/>
</dbReference>
<dbReference type="GO" id="GO:0006166">
    <property type="term" value="P:purine ribonucleoside salvage"/>
    <property type="evidence" value="ECO:0007669"/>
    <property type="project" value="UniProtKB-KW"/>
</dbReference>
<dbReference type="CDD" id="cd06223">
    <property type="entry name" value="PRTases_typeI"/>
    <property type="match status" value="1"/>
</dbReference>
<dbReference type="FunFam" id="3.40.50.2020:FF:000004">
    <property type="entry name" value="Adenine phosphoribosyltransferase"/>
    <property type="match status" value="1"/>
</dbReference>
<dbReference type="Gene3D" id="3.40.50.2020">
    <property type="match status" value="1"/>
</dbReference>
<dbReference type="HAMAP" id="MF_00004">
    <property type="entry name" value="Aden_phosphoribosyltr"/>
    <property type="match status" value="1"/>
</dbReference>
<dbReference type="InterPro" id="IPR005764">
    <property type="entry name" value="Ade_phspho_trans"/>
</dbReference>
<dbReference type="InterPro" id="IPR000836">
    <property type="entry name" value="PRibTrfase_dom"/>
</dbReference>
<dbReference type="InterPro" id="IPR029057">
    <property type="entry name" value="PRTase-like"/>
</dbReference>
<dbReference type="InterPro" id="IPR050054">
    <property type="entry name" value="UPRTase/APRTase"/>
</dbReference>
<dbReference type="NCBIfam" id="TIGR01090">
    <property type="entry name" value="apt"/>
    <property type="match status" value="1"/>
</dbReference>
<dbReference type="NCBIfam" id="NF002632">
    <property type="entry name" value="PRK02304.1-1"/>
    <property type="match status" value="1"/>
</dbReference>
<dbReference type="NCBIfam" id="NF002633">
    <property type="entry name" value="PRK02304.1-2"/>
    <property type="match status" value="1"/>
</dbReference>
<dbReference type="NCBIfam" id="NF002634">
    <property type="entry name" value="PRK02304.1-3"/>
    <property type="match status" value="1"/>
</dbReference>
<dbReference type="NCBIfam" id="NF002636">
    <property type="entry name" value="PRK02304.1-5"/>
    <property type="match status" value="1"/>
</dbReference>
<dbReference type="PANTHER" id="PTHR32315">
    <property type="entry name" value="ADENINE PHOSPHORIBOSYLTRANSFERASE"/>
    <property type="match status" value="1"/>
</dbReference>
<dbReference type="PANTHER" id="PTHR32315:SF3">
    <property type="entry name" value="ADENINE PHOSPHORIBOSYLTRANSFERASE"/>
    <property type="match status" value="1"/>
</dbReference>
<dbReference type="Pfam" id="PF00156">
    <property type="entry name" value="Pribosyltran"/>
    <property type="match status" value="1"/>
</dbReference>
<dbReference type="SUPFAM" id="SSF53271">
    <property type="entry name" value="PRTase-like"/>
    <property type="match status" value="1"/>
</dbReference>
<dbReference type="PROSITE" id="PS00103">
    <property type="entry name" value="PUR_PYR_PR_TRANSFER"/>
    <property type="match status" value="1"/>
</dbReference>
<name>APT_ECOK1</name>
<evidence type="ECO:0000255" key="1">
    <source>
        <dbReference type="HAMAP-Rule" id="MF_00004"/>
    </source>
</evidence>
<evidence type="ECO:0000305" key="2"/>
<reference key="1">
    <citation type="journal article" date="2007" name="J. Bacteriol.">
        <title>The genome sequence of avian pathogenic Escherichia coli strain O1:K1:H7 shares strong similarities with human extraintestinal pathogenic E. coli genomes.</title>
        <authorList>
            <person name="Johnson T.J."/>
            <person name="Kariyawasam S."/>
            <person name="Wannemuehler Y."/>
            <person name="Mangiamele P."/>
            <person name="Johnson S.J."/>
            <person name="Doetkott C."/>
            <person name="Skyberg J.A."/>
            <person name="Lynne A.M."/>
            <person name="Johnson J.R."/>
            <person name="Nolan L.K."/>
        </authorList>
    </citation>
    <scope>NUCLEOTIDE SEQUENCE [LARGE SCALE GENOMIC DNA]</scope>
</reference>
<feature type="chain" id="PRO_0000321363" description="Adenine phosphoribosyltransferase">
    <location>
        <begin position="1"/>
        <end position="183"/>
    </location>
</feature>
<accession>A1A8D5</accession>
<protein>
    <recommendedName>
        <fullName evidence="1">Adenine phosphoribosyltransferase</fullName>
        <shortName evidence="1">APRT</shortName>
        <ecNumber evidence="1">2.4.2.7</ecNumber>
    </recommendedName>
</protein>
<proteinExistence type="inferred from homology"/>
<sequence length="183" mass="19859">MTATAQQLEYLKNSIKSIQDYPKPGILFRDVTSLLEDPKAYALSIDLLVERYKNAGITKVVGTEARGFLFGAPVALGLGVGFVPVRKPGKLPRETISETYDLEYGTDQLEIHVDAIKPGDKVLVVDDLLATGGTIEATVKLIRRLGGEVADAAFIINLFDLGGEQRLEKQGITSYSLVPFPGH</sequence>
<gene>
    <name evidence="1" type="primary">apt</name>
    <name type="ordered locus">Ecok1_04310</name>
    <name type="ORF">APECO1_1546</name>
</gene>
<organism>
    <name type="scientific">Escherichia coli O1:K1 / APEC</name>
    <dbReference type="NCBI Taxonomy" id="405955"/>
    <lineage>
        <taxon>Bacteria</taxon>
        <taxon>Pseudomonadati</taxon>
        <taxon>Pseudomonadota</taxon>
        <taxon>Gammaproteobacteria</taxon>
        <taxon>Enterobacterales</taxon>
        <taxon>Enterobacteriaceae</taxon>
        <taxon>Escherichia</taxon>
    </lineage>
</organism>
<keyword id="KW-0963">Cytoplasm</keyword>
<keyword id="KW-0328">Glycosyltransferase</keyword>
<keyword id="KW-0660">Purine salvage</keyword>
<keyword id="KW-1185">Reference proteome</keyword>
<keyword id="KW-0808">Transferase</keyword>